<evidence type="ECO:0000250" key="1">
    <source>
        <dbReference type="UniProtKB" id="P0A951"/>
    </source>
</evidence>
<evidence type="ECO:0000255" key="2"/>
<evidence type="ECO:0000255" key="3">
    <source>
        <dbReference type="PROSITE-ProRule" id="PRU00532"/>
    </source>
</evidence>
<evidence type="ECO:0000269" key="4">
    <source>
    </source>
</evidence>
<evidence type="ECO:0000303" key="5">
    <source>
    </source>
</evidence>
<evidence type="ECO:0000305" key="6"/>
<evidence type="ECO:0000305" key="7">
    <source>
    </source>
</evidence>
<evidence type="ECO:0000312" key="8">
    <source>
        <dbReference type="EMBL" id="EAK87438.1"/>
    </source>
</evidence>
<evidence type="ECO:0007829" key="9">
    <source>
        <dbReference type="PDB" id="6YUG"/>
    </source>
</evidence>
<name>SSAT_CRYPI</name>
<dbReference type="EC" id="2.3.1.57" evidence="4"/>
<dbReference type="EMBL" id="AAEE01000012">
    <property type="protein sequence ID" value="EAK87438.1"/>
    <property type="molecule type" value="Genomic_DNA"/>
</dbReference>
<dbReference type="RefSeq" id="XP_625421.1">
    <property type="nucleotide sequence ID" value="XM_625421.1"/>
</dbReference>
<dbReference type="PDB" id="6YUG">
    <property type="method" value="X-ray"/>
    <property type="resolution" value="1.95 A"/>
    <property type="chains" value="A/B=1-152"/>
</dbReference>
<dbReference type="PDBsum" id="6YUG"/>
<dbReference type="SMR" id="Q5CPU3"/>
<dbReference type="STRING" id="353152.Q5CPU3"/>
<dbReference type="EnsemblProtists" id="EAK87438">
    <property type="protein sequence ID" value="EAK87438"/>
    <property type="gene ID" value="cgd4_4000"/>
</dbReference>
<dbReference type="GeneID" id="3372423"/>
<dbReference type="KEGG" id="cpv:cgd4_4000"/>
<dbReference type="VEuPathDB" id="CryptoDB:cgd4_4000"/>
<dbReference type="InParanoid" id="Q5CPU3"/>
<dbReference type="OMA" id="CACAGEQ"/>
<dbReference type="OrthoDB" id="10039976at2759"/>
<dbReference type="BRENDA" id="2.3.1.4">
    <property type="organism ID" value="1728"/>
</dbReference>
<dbReference type="SABIO-RK" id="Q5CPU3"/>
<dbReference type="UniPathway" id="UPA00188">
    <property type="reaction ID" value="UER00363"/>
</dbReference>
<dbReference type="Proteomes" id="UP000006726">
    <property type="component" value="Chromosome 4"/>
</dbReference>
<dbReference type="GO" id="GO:0005737">
    <property type="term" value="C:cytoplasm"/>
    <property type="evidence" value="ECO:0000314"/>
    <property type="project" value="UniProtKB"/>
</dbReference>
<dbReference type="GO" id="GO:0004145">
    <property type="term" value="F:diamine N-acetyltransferase activity"/>
    <property type="evidence" value="ECO:0000314"/>
    <property type="project" value="UniProtKB"/>
</dbReference>
<dbReference type="GO" id="GO:0009447">
    <property type="term" value="P:putrescine catabolic process"/>
    <property type="evidence" value="ECO:0007669"/>
    <property type="project" value="UniProtKB-UniPathway"/>
</dbReference>
<dbReference type="GO" id="GO:0032918">
    <property type="term" value="P:spermidine acetylation"/>
    <property type="evidence" value="ECO:0000314"/>
    <property type="project" value="UniProtKB"/>
</dbReference>
<dbReference type="GO" id="GO:0032919">
    <property type="term" value="P:spermine acetylation"/>
    <property type="evidence" value="ECO:0000314"/>
    <property type="project" value="UniProtKB"/>
</dbReference>
<dbReference type="CDD" id="cd04301">
    <property type="entry name" value="NAT_SF"/>
    <property type="match status" value="1"/>
</dbReference>
<dbReference type="Gene3D" id="3.40.630.30">
    <property type="match status" value="1"/>
</dbReference>
<dbReference type="InterPro" id="IPR016181">
    <property type="entry name" value="Acyl_CoA_acyltransferase"/>
</dbReference>
<dbReference type="InterPro" id="IPR000182">
    <property type="entry name" value="GNAT_dom"/>
</dbReference>
<dbReference type="InterPro" id="IPR050680">
    <property type="entry name" value="YpeA/RimI_acetyltransf"/>
</dbReference>
<dbReference type="PANTHER" id="PTHR43420">
    <property type="entry name" value="ACETYLTRANSFERASE"/>
    <property type="match status" value="1"/>
</dbReference>
<dbReference type="Pfam" id="PF00583">
    <property type="entry name" value="Acetyltransf_1"/>
    <property type="match status" value="1"/>
</dbReference>
<dbReference type="SUPFAM" id="SSF55729">
    <property type="entry name" value="Acyl-CoA N-acyltransferases (Nat)"/>
    <property type="match status" value="1"/>
</dbReference>
<dbReference type="PROSITE" id="PS51186">
    <property type="entry name" value="GNAT"/>
    <property type="match status" value="1"/>
</dbReference>
<keyword id="KW-0002">3D-structure</keyword>
<keyword id="KW-0012">Acyltransferase</keyword>
<keyword id="KW-0963">Cytoplasm</keyword>
<keyword id="KW-1185">Reference proteome</keyword>
<keyword id="KW-0808">Transferase</keyword>
<organism>
    <name type="scientific">Cryptosporidium parvum (strain Iowa II)</name>
    <dbReference type="NCBI Taxonomy" id="353152"/>
    <lineage>
        <taxon>Eukaryota</taxon>
        <taxon>Sar</taxon>
        <taxon>Alveolata</taxon>
        <taxon>Apicomplexa</taxon>
        <taxon>Conoidasida</taxon>
        <taxon>Coccidia</taxon>
        <taxon>Eucoccidiorida</taxon>
        <taxon>Eimeriorina</taxon>
        <taxon>Cryptosporidiidae</taxon>
        <taxon>Cryptosporidium</taxon>
    </lineage>
</organism>
<protein>
    <recommendedName>
        <fullName evidence="7">Diamine acetyltransferase</fullName>
        <ecNumber evidence="4">2.3.1.57</ecNumber>
    </recommendedName>
    <alternativeName>
        <fullName evidence="5">Spermidine/spermine N(1)-acetyltransferase</fullName>
        <shortName evidence="5">CpSSAT</shortName>
    </alternativeName>
</protein>
<reference evidence="8" key="1">
    <citation type="journal article" date="2004" name="Science">
        <title>Complete genome sequence of the apicomplexan, Cryptosporidium parvum.</title>
        <authorList>
            <person name="Abrahamsen M.S."/>
            <person name="Templeton T.J."/>
            <person name="Enomoto S."/>
            <person name="Abrahante J.E."/>
            <person name="Zhu G."/>
            <person name="Lancto C.A."/>
            <person name="Deng M."/>
            <person name="Liu C."/>
            <person name="Widmer G."/>
            <person name="Tzipori S."/>
            <person name="Buck G.A."/>
            <person name="Xu P."/>
            <person name="Bankier A.T."/>
            <person name="Dear P.H."/>
            <person name="Konfortov B.A."/>
            <person name="Spriggs H.F."/>
            <person name="Iyer L."/>
            <person name="Anantharaman V."/>
            <person name="Aravind L."/>
            <person name="Kapur V."/>
        </authorList>
    </citation>
    <scope>NUCLEOTIDE SEQUENCE [LARGE SCALE GENOMIC DNA]</scope>
    <source>
        <strain>Iowa II</strain>
    </source>
</reference>
<reference evidence="6" key="2">
    <citation type="journal article" date="2007" name="Mol. Biochem. Parasitol.">
        <title>Cryptosporidium parvum spermidine/spermine N1-acetyltransferase exhibits different characteristics from the host enzyme.</title>
        <authorList>
            <person name="Yarlett N."/>
            <person name="Wu G."/>
            <person name="Waters W.R."/>
            <person name="Harp J.A."/>
            <person name="Wannemuehler M.J."/>
            <person name="Morada M."/>
            <person name="Athanasopoulos D."/>
            <person name="Martinez M.P."/>
            <person name="Upton S.J."/>
            <person name="Marton L.J."/>
            <person name="Frydman B.J."/>
        </authorList>
    </citation>
    <scope>FUNCTION</scope>
    <scope>CATALYTIC ACTIVITY</scope>
    <scope>BIOPHYSICOCHEMICAL PROPERTIES</scope>
    <scope>SUBUNIT</scope>
    <scope>SUBCELLULAR LOCATION</scope>
    <source>
        <strain evidence="4">Iowa II</strain>
    </source>
</reference>
<comment type="function">
    <text evidence="4 5">Enzyme which catalyzes the acetylation of polyamines. Displays higher substrate specificity for spermine than for spermidine. May function to acetylate host-derived polyamines, thus alleviating the necessity for de novo synthesis of these molecules.</text>
</comment>
<comment type="catalytic activity">
    <reaction evidence="4">
        <text>an alkane-alpha,omega-diamine + acetyl-CoA = an N-acetylalkane-alpha,omega-diamine + CoA + H(+)</text>
        <dbReference type="Rhea" id="RHEA:11116"/>
        <dbReference type="Rhea" id="RHEA-COMP:9766"/>
        <dbReference type="Rhea" id="RHEA-COMP:9767"/>
        <dbReference type="ChEBI" id="CHEBI:15378"/>
        <dbReference type="ChEBI" id="CHEBI:57287"/>
        <dbReference type="ChEBI" id="CHEBI:57288"/>
        <dbReference type="ChEBI" id="CHEBI:70977"/>
        <dbReference type="ChEBI" id="CHEBI:70988"/>
        <dbReference type="EC" id="2.3.1.57"/>
    </reaction>
</comment>
<comment type="biophysicochemical properties">
    <kinetics>
        <KM evidence="4">11 uM for spermine</KM>
        <KM evidence="4">50 uM for spermidine</KM>
        <Vmax evidence="4">79.0 umol/min/mg enzyme toward spermine</Vmax>
    </kinetics>
</comment>
<comment type="pathway">
    <text evidence="7">Amine and polyamine degradation; putrescine degradation; N-acetylputrescine from putrescine: step 1/1.</text>
</comment>
<comment type="subunit">
    <text evidence="4">Homotetramer.</text>
</comment>
<comment type="subcellular location">
    <subcellularLocation>
        <location evidence="4">Cytoplasm</location>
    </subcellularLocation>
</comment>
<comment type="similarity">
    <text evidence="2">Belongs to the acetyltransferase family.</text>
</comment>
<sequence>MISSFEVRKATIDDYFELRNLICDVTRCTETLSREQAEERFRYNTYHPYCLVDTENGRIVGYAGFYIIPHLGRKNDSRIEHVIISKEYRNRGLGRLLCKQIIEDAKNKFNCGRIDLTVESHIAKKLYSSLEFEKVNTEVMRNSFLDLTPKSD</sequence>
<gene>
    <name evidence="5" type="primary">SSAT</name>
    <name type="ORF">cgd4_4000</name>
</gene>
<accession>Q5CPU3</accession>
<feature type="chain" id="PRO_0000430034" description="Diamine acetyltransferase">
    <location>
        <begin position="1"/>
        <end position="152"/>
    </location>
</feature>
<feature type="domain" description="N-acetyltransferase" evidence="3">
    <location>
        <begin position="5"/>
        <end position="152"/>
    </location>
</feature>
<feature type="active site" description="Proton donor" evidence="1">
    <location>
        <position position="127"/>
    </location>
</feature>
<feature type="strand" evidence="9">
    <location>
        <begin position="5"/>
        <end position="9"/>
    </location>
</feature>
<feature type="helix" evidence="9">
    <location>
        <begin position="12"/>
        <end position="14"/>
    </location>
</feature>
<feature type="helix" evidence="9">
    <location>
        <begin position="15"/>
        <end position="22"/>
    </location>
</feature>
<feature type="turn" evidence="9">
    <location>
        <begin position="23"/>
        <end position="25"/>
    </location>
</feature>
<feature type="helix" evidence="9">
    <location>
        <begin position="34"/>
        <end position="41"/>
    </location>
</feature>
<feature type="strand" evidence="9">
    <location>
        <begin position="46"/>
        <end position="56"/>
    </location>
</feature>
<feature type="strand" evidence="9">
    <location>
        <begin position="59"/>
        <end position="68"/>
    </location>
</feature>
<feature type="strand" evidence="9">
    <location>
        <begin position="71"/>
        <end position="73"/>
    </location>
</feature>
<feature type="strand" evidence="9">
    <location>
        <begin position="76"/>
        <end position="84"/>
    </location>
</feature>
<feature type="helix" evidence="9">
    <location>
        <begin position="86"/>
        <end position="88"/>
    </location>
</feature>
<feature type="strand" evidence="9">
    <location>
        <begin position="90"/>
        <end position="92"/>
    </location>
</feature>
<feature type="helix" evidence="9">
    <location>
        <begin position="93"/>
        <end position="107"/>
    </location>
</feature>
<feature type="strand" evidence="9">
    <location>
        <begin position="112"/>
        <end position="118"/>
    </location>
</feature>
<feature type="helix" evidence="9">
    <location>
        <begin position="121"/>
        <end position="128"/>
    </location>
</feature>
<feature type="turn" evidence="9">
    <location>
        <begin position="129"/>
        <end position="131"/>
    </location>
</feature>
<feature type="strand" evidence="9">
    <location>
        <begin position="139"/>
        <end position="143"/>
    </location>
</feature>
<proteinExistence type="evidence at protein level"/>